<protein>
    <recommendedName>
        <fullName>Limb region 1 homolog-like protein</fullName>
    </recommendedName>
</protein>
<organism>
    <name type="scientific">Danio rerio</name>
    <name type="common">Zebrafish</name>
    <name type="synonym">Brachydanio rerio</name>
    <dbReference type="NCBI Taxonomy" id="7955"/>
    <lineage>
        <taxon>Eukaryota</taxon>
        <taxon>Metazoa</taxon>
        <taxon>Chordata</taxon>
        <taxon>Craniata</taxon>
        <taxon>Vertebrata</taxon>
        <taxon>Euteleostomi</taxon>
        <taxon>Actinopterygii</taxon>
        <taxon>Neopterygii</taxon>
        <taxon>Teleostei</taxon>
        <taxon>Ostariophysi</taxon>
        <taxon>Cypriniformes</taxon>
        <taxon>Danionidae</taxon>
        <taxon>Danioninae</taxon>
        <taxon>Danio</taxon>
    </lineage>
</organism>
<evidence type="ECO:0000250" key="1">
    <source>
        <dbReference type="UniProtKB" id="Q6UX01"/>
    </source>
</evidence>
<evidence type="ECO:0000250" key="2">
    <source>
        <dbReference type="UniProtKB" id="Q9D1E5"/>
    </source>
</evidence>
<evidence type="ECO:0000255" key="3"/>
<evidence type="ECO:0000305" key="4"/>
<gene>
    <name type="primary">lmbr1l</name>
    <name type="ORF">zgc:55912</name>
</gene>
<dbReference type="EMBL" id="BC044535">
    <property type="protein sequence ID" value="AAH44535.1"/>
    <property type="molecule type" value="mRNA"/>
</dbReference>
<dbReference type="RefSeq" id="NP_942575.1">
    <property type="nucleotide sequence ID" value="NM_198874.1"/>
</dbReference>
<dbReference type="FunCoup" id="Q803C7">
    <property type="interactions" value="1728"/>
</dbReference>
<dbReference type="STRING" id="7955.ENSDARP00000019361"/>
<dbReference type="PaxDb" id="7955-ENSDARP00000019361"/>
<dbReference type="Ensembl" id="ENSDART00000027224">
    <property type="protein sequence ID" value="ENSDARP00000019361"/>
    <property type="gene ID" value="ENSDARG00000004745"/>
</dbReference>
<dbReference type="GeneID" id="321314"/>
<dbReference type="KEGG" id="dre:321314"/>
<dbReference type="AGR" id="ZFIN:ZDB-GENE-030131-9906"/>
<dbReference type="CTD" id="55716"/>
<dbReference type="ZFIN" id="ZDB-GENE-030131-9906">
    <property type="gene designation" value="lmbr1l"/>
</dbReference>
<dbReference type="eggNOG" id="KOG3722">
    <property type="taxonomic scope" value="Eukaryota"/>
</dbReference>
<dbReference type="HOGENOM" id="CLU_029445_1_0_1"/>
<dbReference type="InParanoid" id="Q803C7"/>
<dbReference type="OMA" id="PLIYSCV"/>
<dbReference type="OrthoDB" id="5596951at2759"/>
<dbReference type="PhylomeDB" id="Q803C7"/>
<dbReference type="TreeFam" id="TF313485"/>
<dbReference type="PRO" id="PR:Q803C7"/>
<dbReference type="Proteomes" id="UP000000437">
    <property type="component" value="Chromosome 23"/>
</dbReference>
<dbReference type="Bgee" id="ENSDARG00000004745">
    <property type="expression patterns" value="Expressed in blastula and 34 other cell types or tissues"/>
</dbReference>
<dbReference type="GO" id="GO:0005789">
    <property type="term" value="C:endoplasmic reticulum membrane"/>
    <property type="evidence" value="ECO:0000250"/>
    <property type="project" value="UniProtKB"/>
</dbReference>
<dbReference type="GO" id="GO:0005886">
    <property type="term" value="C:plasma membrane"/>
    <property type="evidence" value="ECO:0000250"/>
    <property type="project" value="UniProtKB"/>
</dbReference>
<dbReference type="GO" id="GO:0004888">
    <property type="term" value="F:transmembrane signaling receptor activity"/>
    <property type="evidence" value="ECO:0000318"/>
    <property type="project" value="GO_Central"/>
</dbReference>
<dbReference type="GO" id="GO:0090090">
    <property type="term" value="P:negative regulation of canonical Wnt signaling pathway"/>
    <property type="evidence" value="ECO:0000250"/>
    <property type="project" value="UniProtKB"/>
</dbReference>
<dbReference type="GO" id="GO:0006898">
    <property type="term" value="P:receptor-mediated endocytosis"/>
    <property type="evidence" value="ECO:0000318"/>
    <property type="project" value="GO_Central"/>
</dbReference>
<dbReference type="GO" id="GO:0007165">
    <property type="term" value="P:signal transduction"/>
    <property type="evidence" value="ECO:0000318"/>
    <property type="project" value="GO_Central"/>
</dbReference>
<dbReference type="GO" id="GO:0016055">
    <property type="term" value="P:Wnt signaling pathway"/>
    <property type="evidence" value="ECO:0007669"/>
    <property type="project" value="UniProtKB-KW"/>
</dbReference>
<dbReference type="InterPro" id="IPR008075">
    <property type="entry name" value="LIMR"/>
</dbReference>
<dbReference type="InterPro" id="IPR006876">
    <property type="entry name" value="LMBR1-like_membr_prot"/>
</dbReference>
<dbReference type="PANTHER" id="PTHR12625">
    <property type="entry name" value="LIPOCALIN-1 INTERACTING MEMBRANE RECEPTOR LIMR"/>
    <property type="match status" value="1"/>
</dbReference>
<dbReference type="PANTHER" id="PTHR12625:SF2">
    <property type="entry name" value="PROTEIN LMBR1L"/>
    <property type="match status" value="1"/>
</dbReference>
<dbReference type="Pfam" id="PF04791">
    <property type="entry name" value="LMBR1"/>
    <property type="match status" value="2"/>
</dbReference>
<dbReference type="PRINTS" id="PR01692">
    <property type="entry name" value="LIPOCALINIMR"/>
</dbReference>
<comment type="function">
    <text evidence="1 2">May play a role in lymphocyte development by negatively regulating the canonical Wnt signaling pathway (By similarity). May act as a LCN1 receptor (By similarity).</text>
</comment>
<comment type="subunit">
    <text evidence="1">Dimer (By similarity). Can also form higher oligomers (By similarity).</text>
</comment>
<comment type="subcellular location">
    <subcellularLocation>
        <location evidence="1">Cell membrane</location>
        <topology evidence="3">Multi-pass membrane protein</topology>
    </subcellularLocation>
    <subcellularLocation>
        <location evidence="1">Endoplasmic reticulum membrane</location>
        <topology evidence="3">Multi-pass membrane protein</topology>
    </subcellularLocation>
</comment>
<comment type="similarity">
    <text evidence="4">Belongs to the LIMR family.</text>
</comment>
<proteinExistence type="evidence at transcript level"/>
<sequence length="491" mass="55147">METEDVTVREQIFHDRVRETIICVLLFICLYILSHFILTHFKKSAEFVTDDIEDATVNKIALWLCTFTLSVAVCAVLLLPISILSNEVLLTFPHSYYMQWLNGSLIRGLWNLVFLFSNLSLVFLMPFAYFFTESEGFAGSKKGVMARVYETAVMLLLLSLLVLGIVWVASALLHHNTARESLYDLWEYYLPYLYSGISLFGVLLLLLCTPFGLSRMFSVTGSLLVKPRLLENLEETMNCAVFEEASLSRKLKSTNTCWISAHLEALNKEFLSVQSKRITLELRKRASPWQRNLVYPVAMLLLLALTAVSVLMVCFHVLELLFDESAMPRGMEDPHLGLASFSMLGSLGAAVQVVIILYLMVSSVVGFYSSPLFTGLLPRAQDTTLTQIIGNCVSLLILSSALPVFSRTLGITKFDLLGDFGRHDWLGSFHIVFLYNMLFAGLTSACLINTVTWALQRELIRAFGLHRLPLTVSRSTIPLKLLLANGLSKIH</sequence>
<name>LMBRL_DANRE</name>
<keyword id="KW-1003">Cell membrane</keyword>
<keyword id="KW-0254">Endocytosis</keyword>
<keyword id="KW-0256">Endoplasmic reticulum</keyword>
<keyword id="KW-0472">Membrane</keyword>
<keyword id="KW-0675">Receptor</keyword>
<keyword id="KW-1185">Reference proteome</keyword>
<keyword id="KW-0812">Transmembrane</keyword>
<keyword id="KW-1133">Transmembrane helix</keyword>
<keyword id="KW-0879">Wnt signaling pathway</keyword>
<reference key="1">
    <citation type="submission" date="2003-01" db="EMBL/GenBank/DDBJ databases">
        <authorList>
            <consortium name="NIH - Zebrafish Gene Collection (ZGC) project"/>
        </authorList>
    </citation>
    <scope>NUCLEOTIDE SEQUENCE [LARGE SCALE MRNA]</scope>
    <source>
        <strain>AB</strain>
    </source>
</reference>
<feature type="chain" id="PRO_0000053915" description="Limb region 1 homolog-like protein">
    <location>
        <begin position="1"/>
        <end position="491"/>
    </location>
</feature>
<feature type="topological domain" description="Extracellular" evidence="3">
    <location>
        <begin position="1"/>
        <end position="20"/>
    </location>
</feature>
<feature type="transmembrane region" description="Helical" evidence="3">
    <location>
        <begin position="21"/>
        <end position="41"/>
    </location>
</feature>
<feature type="topological domain" description="Cytoplasmic" evidence="3">
    <location>
        <begin position="42"/>
        <end position="59"/>
    </location>
</feature>
<feature type="transmembrane region" description="Helical" evidence="3">
    <location>
        <begin position="60"/>
        <end position="80"/>
    </location>
</feature>
<feature type="topological domain" description="Extracellular" evidence="3">
    <location>
        <begin position="81"/>
        <end position="111"/>
    </location>
</feature>
<feature type="transmembrane region" description="Helical" evidence="3">
    <location>
        <begin position="112"/>
        <end position="132"/>
    </location>
</feature>
<feature type="topological domain" description="Cytoplasmic" evidence="3">
    <location>
        <begin position="133"/>
        <end position="152"/>
    </location>
</feature>
<feature type="transmembrane region" description="Helical" evidence="3">
    <location>
        <begin position="153"/>
        <end position="173"/>
    </location>
</feature>
<feature type="topological domain" description="Extracellular" evidence="3">
    <location>
        <begin position="174"/>
        <end position="192"/>
    </location>
</feature>
<feature type="transmembrane region" description="Helical" evidence="3">
    <location>
        <begin position="193"/>
        <end position="213"/>
    </location>
</feature>
<feature type="topological domain" description="Cytoplasmic" evidence="3">
    <location>
        <begin position="214"/>
        <end position="292"/>
    </location>
</feature>
<feature type="transmembrane region" description="Helical" evidence="3">
    <location>
        <begin position="293"/>
        <end position="313"/>
    </location>
</feature>
<feature type="topological domain" description="Extracellular" evidence="3">
    <location>
        <begin position="314"/>
        <end position="346"/>
    </location>
</feature>
<feature type="transmembrane region" description="Helical" evidence="3">
    <location>
        <begin position="347"/>
        <end position="367"/>
    </location>
</feature>
<feature type="topological domain" description="Cytoplasmic" evidence="3">
    <location>
        <begin position="368"/>
        <end position="384"/>
    </location>
</feature>
<feature type="transmembrane region" description="Helical" evidence="3">
    <location>
        <begin position="385"/>
        <end position="405"/>
    </location>
</feature>
<feature type="topological domain" description="Extracellular" evidence="3">
    <location>
        <begin position="406"/>
        <end position="427"/>
    </location>
</feature>
<feature type="transmembrane region" description="Helical" evidence="3">
    <location>
        <begin position="428"/>
        <end position="448"/>
    </location>
</feature>
<feature type="topological domain" description="Cytoplasmic" evidence="3">
    <location>
        <begin position="449"/>
        <end position="491"/>
    </location>
</feature>
<accession>Q803C7</accession>